<evidence type="ECO:0000255" key="1"/>
<evidence type="ECO:0000255" key="2">
    <source>
        <dbReference type="PROSITE-ProRule" id="PRU00176"/>
    </source>
</evidence>
<evidence type="ECO:0000256" key="3">
    <source>
        <dbReference type="SAM" id="MobiDB-lite"/>
    </source>
</evidence>
<evidence type="ECO:0000269" key="4">
    <source>
    </source>
</evidence>
<evidence type="ECO:0000269" key="5">
    <source ref="5"/>
</evidence>
<dbReference type="EMBL" id="AJ295236">
    <property type="protein sequence ID" value="CAC16735.1"/>
    <property type="molecule type" value="mRNA"/>
</dbReference>
<dbReference type="EMBL" id="AE013599">
    <property type="protein sequence ID" value="AAF47254.1"/>
    <property type="molecule type" value="Genomic_DNA"/>
</dbReference>
<dbReference type="EMBL" id="AY052060">
    <property type="protein sequence ID" value="AAK93484.1"/>
    <property type="molecule type" value="mRNA"/>
</dbReference>
<dbReference type="RefSeq" id="NP_001246498.1">
    <property type="nucleotide sequence ID" value="NM_001259569.2"/>
</dbReference>
<dbReference type="RefSeq" id="NP_523851.1">
    <property type="nucleotide sequence ID" value="NM_079127.3"/>
</dbReference>
<dbReference type="RefSeq" id="NP_726472.1">
    <property type="nucleotide sequence ID" value="NM_166682.3"/>
</dbReference>
<dbReference type="SMR" id="Q9W123"/>
<dbReference type="BioGRID" id="63519">
    <property type="interactions" value="8"/>
</dbReference>
<dbReference type="DIP" id="DIP-23412N"/>
<dbReference type="FunCoup" id="Q9W123">
    <property type="interactions" value="250"/>
</dbReference>
<dbReference type="IntAct" id="Q9W123">
    <property type="interactions" value="14"/>
</dbReference>
<dbReference type="STRING" id="7227.FBpp0072234"/>
<dbReference type="PaxDb" id="7227-FBpp0072234"/>
<dbReference type="DNASU" id="37947"/>
<dbReference type="EnsemblMetazoa" id="FBtr0072327">
    <property type="protein sequence ID" value="FBpp0072234"/>
    <property type="gene ID" value="FBgn0035047"/>
</dbReference>
<dbReference type="EnsemblMetazoa" id="FBtr0072328">
    <property type="protein sequence ID" value="FBpp0072235"/>
    <property type="gene ID" value="FBgn0035047"/>
</dbReference>
<dbReference type="EnsemblMetazoa" id="FBtr0306655">
    <property type="protein sequence ID" value="FBpp0297610"/>
    <property type="gene ID" value="FBgn0035047"/>
</dbReference>
<dbReference type="GeneID" id="37947"/>
<dbReference type="KEGG" id="dme:Dmel_CG3691"/>
<dbReference type="AGR" id="FB:FBgn0035047"/>
<dbReference type="CTD" id="37947"/>
<dbReference type="FlyBase" id="FBgn0035047">
    <property type="gene designation" value="Pof"/>
</dbReference>
<dbReference type="VEuPathDB" id="VectorBase:FBgn0035047"/>
<dbReference type="eggNOG" id="ENOG502S366">
    <property type="taxonomic scope" value="Eukaryota"/>
</dbReference>
<dbReference type="GeneTree" id="ENSGT00940000174726"/>
<dbReference type="HOGENOM" id="CLU_042851_0_0_1"/>
<dbReference type="InParanoid" id="Q9W123"/>
<dbReference type="OMA" id="MEDPIKC"/>
<dbReference type="OrthoDB" id="4726at2759"/>
<dbReference type="PhylomeDB" id="Q9W123"/>
<dbReference type="SignaLink" id="Q9W123"/>
<dbReference type="BioGRID-ORCS" id="37947">
    <property type="hits" value="0 hits in 1 CRISPR screen"/>
</dbReference>
<dbReference type="ChiTaRS" id="Pof">
    <property type="organism name" value="fly"/>
</dbReference>
<dbReference type="GenomeRNAi" id="37947"/>
<dbReference type="PRO" id="PR:Q9W123"/>
<dbReference type="Proteomes" id="UP000000803">
    <property type="component" value="Chromosome 2R"/>
</dbReference>
<dbReference type="Bgee" id="FBgn0035047">
    <property type="expression patterns" value="Expressed in early elongation stage spermatid (Drosophila) in testis and 108 other cell types or tissues"/>
</dbReference>
<dbReference type="ExpressionAtlas" id="Q9W123">
    <property type="expression patterns" value="baseline and differential"/>
</dbReference>
<dbReference type="GO" id="GO:0030849">
    <property type="term" value="C:autosome"/>
    <property type="evidence" value="ECO:0000314"/>
    <property type="project" value="UniProtKB"/>
</dbReference>
<dbReference type="GO" id="GO:0005694">
    <property type="term" value="C:chromosome"/>
    <property type="evidence" value="ECO:0000314"/>
    <property type="project" value="FlyBase"/>
</dbReference>
<dbReference type="GO" id="GO:0005737">
    <property type="term" value="C:cytoplasm"/>
    <property type="evidence" value="ECO:0000318"/>
    <property type="project" value="GO_Central"/>
</dbReference>
<dbReference type="GO" id="GO:0005634">
    <property type="term" value="C:nucleus"/>
    <property type="evidence" value="ECO:0000318"/>
    <property type="project" value="GO_Central"/>
</dbReference>
<dbReference type="GO" id="GO:0005700">
    <property type="term" value="C:polytene chromosome"/>
    <property type="evidence" value="ECO:0000314"/>
    <property type="project" value="FlyBase"/>
</dbReference>
<dbReference type="GO" id="GO:1990904">
    <property type="term" value="C:ribonucleoprotein complex"/>
    <property type="evidence" value="ECO:0000318"/>
    <property type="project" value="GO_Central"/>
</dbReference>
<dbReference type="GO" id="GO:0003682">
    <property type="term" value="F:chromatin binding"/>
    <property type="evidence" value="ECO:0000314"/>
    <property type="project" value="FlyBase"/>
</dbReference>
<dbReference type="GO" id="GO:0003729">
    <property type="term" value="F:mRNA binding"/>
    <property type="evidence" value="ECO:0000250"/>
    <property type="project" value="FlyBase"/>
</dbReference>
<dbReference type="GO" id="GO:0003723">
    <property type="term" value="F:RNA binding"/>
    <property type="evidence" value="ECO:0000303"/>
    <property type="project" value="UniProtKB"/>
</dbReference>
<dbReference type="GO" id="GO:0010628">
    <property type="term" value="P:positive regulation of gene expression"/>
    <property type="evidence" value="ECO:0000315"/>
    <property type="project" value="FlyBase"/>
</dbReference>
<dbReference type="CDD" id="cd00590">
    <property type="entry name" value="RRM_SF"/>
    <property type="match status" value="1"/>
</dbReference>
<dbReference type="FunFam" id="3.30.70.330:FF:001450">
    <property type="entry name" value="Protein painting of fourth"/>
    <property type="match status" value="1"/>
</dbReference>
<dbReference type="Gene3D" id="3.30.70.330">
    <property type="match status" value="1"/>
</dbReference>
<dbReference type="InterPro" id="IPR012677">
    <property type="entry name" value="Nucleotide-bd_a/b_plait_sf"/>
</dbReference>
<dbReference type="InterPro" id="IPR035979">
    <property type="entry name" value="RBD_domain_sf"/>
</dbReference>
<dbReference type="InterPro" id="IPR000504">
    <property type="entry name" value="RRM_dom"/>
</dbReference>
<dbReference type="Pfam" id="PF00076">
    <property type="entry name" value="RRM_1"/>
    <property type="match status" value="1"/>
</dbReference>
<dbReference type="SMART" id="SM00360">
    <property type="entry name" value="RRM"/>
    <property type="match status" value="1"/>
</dbReference>
<dbReference type="SUPFAM" id="SSF54928">
    <property type="entry name" value="RNA-binding domain, RBD"/>
    <property type="match status" value="1"/>
</dbReference>
<dbReference type="PROSITE" id="PS50102">
    <property type="entry name" value="RRM"/>
    <property type="match status" value="1"/>
</dbReference>
<comment type="function">
    <text>Probable RNA-binding protein that specifically binds to the fourth chromosome and may bind an RNA that spreads the fourth chromosome. May be a reminiscence of X chromosome dosage compensation of ancestral Drosophila species in which the X and the fourth chromosomes are one single chromosome.</text>
</comment>
<comment type="subunit">
    <text evidence="5">Interacts with Zeste.</text>
</comment>
<comment type="interaction">
    <interactant intactId="EBI-155974">
        <id>Q9W123</id>
    </interactant>
    <interactant intactId="EBI-140830">
        <id>Q32KD2</id>
        <label>egg</label>
    </interactant>
    <organismsDiffer>false</organismsDiffer>
    <experiments>2</experiments>
</comment>
<comment type="subcellular location">
    <subcellularLocation>
        <location evidence="4">Nucleus</location>
    </subcellularLocation>
    <subcellularLocation>
        <location evidence="4">Chromosome</location>
    </subcellularLocation>
    <text>Specifically binds to the fourth chromosome.</text>
</comment>
<comment type="tissue specificity">
    <text evidence="4">Weakly expressed in embryos. Expression increases during larval and pupal stages. In adults, it is predominantly expressed in males, while it is weakly expressed in females.</text>
</comment>
<reference key="1">
    <citation type="journal article" date="2001" name="Proc. Natl. Acad. Sci. U.S.A.">
        <title>Painting of fourth, a chromosome-specific protein in Drosophila.</title>
        <authorList>
            <person name="Larsson J."/>
            <person name="Chen J.D."/>
            <person name="Rasheva V."/>
            <person name="Rasmuson-Lestander A."/>
            <person name="Pirrotta V."/>
        </authorList>
    </citation>
    <scope>NUCLEOTIDE SEQUENCE [MRNA]</scope>
    <scope>SUBCELLULAR LOCATION</scope>
    <scope>TISSUE SPECIFICITY</scope>
    <source>
        <strain>Canton-S</strain>
    </source>
</reference>
<reference key="2">
    <citation type="journal article" date="2000" name="Science">
        <title>The genome sequence of Drosophila melanogaster.</title>
        <authorList>
            <person name="Adams M.D."/>
            <person name="Celniker S.E."/>
            <person name="Holt R.A."/>
            <person name="Evans C.A."/>
            <person name="Gocayne J.D."/>
            <person name="Amanatides P.G."/>
            <person name="Scherer S.E."/>
            <person name="Li P.W."/>
            <person name="Hoskins R.A."/>
            <person name="Galle R.F."/>
            <person name="George R.A."/>
            <person name="Lewis S.E."/>
            <person name="Richards S."/>
            <person name="Ashburner M."/>
            <person name="Henderson S.N."/>
            <person name="Sutton G.G."/>
            <person name="Wortman J.R."/>
            <person name="Yandell M.D."/>
            <person name="Zhang Q."/>
            <person name="Chen L.X."/>
            <person name="Brandon R.C."/>
            <person name="Rogers Y.-H.C."/>
            <person name="Blazej R.G."/>
            <person name="Champe M."/>
            <person name="Pfeiffer B.D."/>
            <person name="Wan K.H."/>
            <person name="Doyle C."/>
            <person name="Baxter E.G."/>
            <person name="Helt G."/>
            <person name="Nelson C.R."/>
            <person name="Miklos G.L.G."/>
            <person name="Abril J.F."/>
            <person name="Agbayani A."/>
            <person name="An H.-J."/>
            <person name="Andrews-Pfannkoch C."/>
            <person name="Baldwin D."/>
            <person name="Ballew R.M."/>
            <person name="Basu A."/>
            <person name="Baxendale J."/>
            <person name="Bayraktaroglu L."/>
            <person name="Beasley E.M."/>
            <person name="Beeson K.Y."/>
            <person name="Benos P.V."/>
            <person name="Berman B.P."/>
            <person name="Bhandari D."/>
            <person name="Bolshakov S."/>
            <person name="Borkova D."/>
            <person name="Botchan M.R."/>
            <person name="Bouck J."/>
            <person name="Brokstein P."/>
            <person name="Brottier P."/>
            <person name="Burtis K.C."/>
            <person name="Busam D.A."/>
            <person name="Butler H."/>
            <person name="Cadieu E."/>
            <person name="Center A."/>
            <person name="Chandra I."/>
            <person name="Cherry J.M."/>
            <person name="Cawley S."/>
            <person name="Dahlke C."/>
            <person name="Davenport L.B."/>
            <person name="Davies P."/>
            <person name="de Pablos B."/>
            <person name="Delcher A."/>
            <person name="Deng Z."/>
            <person name="Mays A.D."/>
            <person name="Dew I."/>
            <person name="Dietz S.M."/>
            <person name="Dodson K."/>
            <person name="Doup L.E."/>
            <person name="Downes M."/>
            <person name="Dugan-Rocha S."/>
            <person name="Dunkov B.C."/>
            <person name="Dunn P."/>
            <person name="Durbin K.J."/>
            <person name="Evangelista C.C."/>
            <person name="Ferraz C."/>
            <person name="Ferriera S."/>
            <person name="Fleischmann W."/>
            <person name="Fosler C."/>
            <person name="Gabrielian A.E."/>
            <person name="Garg N.S."/>
            <person name="Gelbart W.M."/>
            <person name="Glasser K."/>
            <person name="Glodek A."/>
            <person name="Gong F."/>
            <person name="Gorrell J.H."/>
            <person name="Gu Z."/>
            <person name="Guan P."/>
            <person name="Harris M."/>
            <person name="Harris N.L."/>
            <person name="Harvey D.A."/>
            <person name="Heiman T.J."/>
            <person name="Hernandez J.R."/>
            <person name="Houck J."/>
            <person name="Hostin D."/>
            <person name="Houston K.A."/>
            <person name="Howland T.J."/>
            <person name="Wei M.-H."/>
            <person name="Ibegwam C."/>
            <person name="Jalali M."/>
            <person name="Kalush F."/>
            <person name="Karpen G.H."/>
            <person name="Ke Z."/>
            <person name="Kennison J.A."/>
            <person name="Ketchum K.A."/>
            <person name="Kimmel B.E."/>
            <person name="Kodira C.D."/>
            <person name="Kraft C.L."/>
            <person name="Kravitz S."/>
            <person name="Kulp D."/>
            <person name="Lai Z."/>
            <person name="Lasko P."/>
            <person name="Lei Y."/>
            <person name="Levitsky A.A."/>
            <person name="Li J.H."/>
            <person name="Li Z."/>
            <person name="Liang Y."/>
            <person name="Lin X."/>
            <person name="Liu X."/>
            <person name="Mattei B."/>
            <person name="McIntosh T.C."/>
            <person name="McLeod M.P."/>
            <person name="McPherson D."/>
            <person name="Merkulov G."/>
            <person name="Milshina N.V."/>
            <person name="Mobarry C."/>
            <person name="Morris J."/>
            <person name="Moshrefi A."/>
            <person name="Mount S.M."/>
            <person name="Moy M."/>
            <person name="Murphy B."/>
            <person name="Murphy L."/>
            <person name="Muzny D.M."/>
            <person name="Nelson D.L."/>
            <person name="Nelson D.R."/>
            <person name="Nelson K.A."/>
            <person name="Nixon K."/>
            <person name="Nusskern D.R."/>
            <person name="Pacleb J.M."/>
            <person name="Palazzolo M."/>
            <person name="Pittman G.S."/>
            <person name="Pan S."/>
            <person name="Pollard J."/>
            <person name="Puri V."/>
            <person name="Reese M.G."/>
            <person name="Reinert K."/>
            <person name="Remington K."/>
            <person name="Saunders R.D.C."/>
            <person name="Scheeler F."/>
            <person name="Shen H."/>
            <person name="Shue B.C."/>
            <person name="Siden-Kiamos I."/>
            <person name="Simpson M."/>
            <person name="Skupski M.P."/>
            <person name="Smith T.J."/>
            <person name="Spier E."/>
            <person name="Spradling A.C."/>
            <person name="Stapleton M."/>
            <person name="Strong R."/>
            <person name="Sun E."/>
            <person name="Svirskas R."/>
            <person name="Tector C."/>
            <person name="Turner R."/>
            <person name="Venter E."/>
            <person name="Wang A.H."/>
            <person name="Wang X."/>
            <person name="Wang Z.-Y."/>
            <person name="Wassarman D.A."/>
            <person name="Weinstock G.M."/>
            <person name="Weissenbach J."/>
            <person name="Williams S.M."/>
            <person name="Woodage T."/>
            <person name="Worley K.C."/>
            <person name="Wu D."/>
            <person name="Yang S."/>
            <person name="Yao Q.A."/>
            <person name="Ye J."/>
            <person name="Yeh R.-F."/>
            <person name="Zaveri J.S."/>
            <person name="Zhan M."/>
            <person name="Zhang G."/>
            <person name="Zhao Q."/>
            <person name="Zheng L."/>
            <person name="Zheng X.H."/>
            <person name="Zhong F.N."/>
            <person name="Zhong W."/>
            <person name="Zhou X."/>
            <person name="Zhu S.C."/>
            <person name="Zhu X."/>
            <person name="Smith H.O."/>
            <person name="Gibbs R.A."/>
            <person name="Myers E.W."/>
            <person name="Rubin G.M."/>
            <person name="Venter J.C."/>
        </authorList>
    </citation>
    <scope>NUCLEOTIDE SEQUENCE [LARGE SCALE GENOMIC DNA]</scope>
    <source>
        <strain>Berkeley</strain>
    </source>
</reference>
<reference key="3">
    <citation type="journal article" date="2002" name="Genome Biol.">
        <title>Annotation of the Drosophila melanogaster euchromatic genome: a systematic review.</title>
        <authorList>
            <person name="Misra S."/>
            <person name="Crosby M.A."/>
            <person name="Mungall C.J."/>
            <person name="Matthews B.B."/>
            <person name="Campbell K.S."/>
            <person name="Hradecky P."/>
            <person name="Huang Y."/>
            <person name="Kaminker J.S."/>
            <person name="Millburn G.H."/>
            <person name="Prochnik S.E."/>
            <person name="Smith C.D."/>
            <person name="Tupy J.L."/>
            <person name="Whitfield E.J."/>
            <person name="Bayraktaroglu L."/>
            <person name="Berman B.P."/>
            <person name="Bettencourt B.R."/>
            <person name="Celniker S.E."/>
            <person name="de Grey A.D.N.J."/>
            <person name="Drysdale R.A."/>
            <person name="Harris N.L."/>
            <person name="Richter J."/>
            <person name="Russo S."/>
            <person name="Schroeder A.J."/>
            <person name="Shu S.Q."/>
            <person name="Stapleton M."/>
            <person name="Yamada C."/>
            <person name="Ashburner M."/>
            <person name="Gelbart W.M."/>
            <person name="Rubin G.M."/>
            <person name="Lewis S.E."/>
        </authorList>
    </citation>
    <scope>GENOME REANNOTATION</scope>
    <source>
        <strain>Berkeley</strain>
    </source>
</reference>
<reference key="4">
    <citation type="journal article" date="2002" name="Genome Biol.">
        <title>A Drosophila full-length cDNA resource.</title>
        <authorList>
            <person name="Stapleton M."/>
            <person name="Carlson J.W."/>
            <person name="Brokstein P."/>
            <person name="Yu C."/>
            <person name="Champe M."/>
            <person name="George R.A."/>
            <person name="Guarin H."/>
            <person name="Kronmiller B."/>
            <person name="Pacleb J.M."/>
            <person name="Park S."/>
            <person name="Wan K.H."/>
            <person name="Rubin G.M."/>
            <person name="Celniker S.E."/>
        </authorList>
    </citation>
    <scope>NUCLEOTIDE SEQUENCE [LARGE SCALE MRNA]</scope>
    <source>
        <strain>Berkeley</strain>
        <tissue>Larva</tissue>
        <tissue>Pupae</tissue>
    </source>
</reference>
<reference key="5">
    <citation type="thesis" date="1992" institute="Baylor College of Medicine / Houston" country="United States">
        <authorList>
            <person name="Chen J.D."/>
        </authorList>
    </citation>
    <scope>PARTIAL NUCLEOTIDE SEQUENCE</scope>
    <scope>INTERACTION WITH ZESTE</scope>
</reference>
<protein>
    <recommendedName>
        <fullName>Protein painting of fourth</fullName>
    </recommendedName>
    <alternativeName>
        <fullName>Zeste-interacting protein 16</fullName>
        <shortName>Zip16</shortName>
    </alternativeName>
</protein>
<keyword id="KW-0158">Chromosome</keyword>
<keyword id="KW-0539">Nucleus</keyword>
<keyword id="KW-1185">Reference proteome</keyword>
<keyword id="KW-0694">RNA-binding</keyword>
<accession>Q9W123</accession>
<accession>Q0E8W2</accession>
<organism>
    <name type="scientific">Drosophila melanogaster</name>
    <name type="common">Fruit fly</name>
    <dbReference type="NCBI Taxonomy" id="7227"/>
    <lineage>
        <taxon>Eukaryota</taxon>
        <taxon>Metazoa</taxon>
        <taxon>Ecdysozoa</taxon>
        <taxon>Arthropoda</taxon>
        <taxon>Hexapoda</taxon>
        <taxon>Insecta</taxon>
        <taxon>Pterygota</taxon>
        <taxon>Neoptera</taxon>
        <taxon>Endopterygota</taxon>
        <taxon>Diptera</taxon>
        <taxon>Brachycera</taxon>
        <taxon>Muscomorpha</taxon>
        <taxon>Ephydroidea</taxon>
        <taxon>Drosophilidae</taxon>
        <taxon>Drosophila</taxon>
        <taxon>Sophophora</taxon>
    </lineage>
</organism>
<name>POF_DROME</name>
<proteinExistence type="evidence at protein level"/>
<feature type="chain" id="PRO_0000081730" description="Protein painting of fourth">
    <location>
        <begin position="1"/>
        <end position="495"/>
    </location>
</feature>
<feature type="domain" description="RRM" evidence="2">
    <location>
        <begin position="215"/>
        <end position="289"/>
    </location>
</feature>
<feature type="region of interest" description="Disordered" evidence="3">
    <location>
        <begin position="1"/>
        <end position="51"/>
    </location>
</feature>
<feature type="region of interest" description="Disordered" evidence="3">
    <location>
        <begin position="332"/>
        <end position="358"/>
    </location>
</feature>
<feature type="region of interest" description="Disordered" evidence="3">
    <location>
        <begin position="432"/>
        <end position="451"/>
    </location>
</feature>
<feature type="region of interest" description="Disordered" evidence="3">
    <location>
        <begin position="461"/>
        <end position="495"/>
    </location>
</feature>
<feature type="short sequence motif" description="Bipartite nuclear localization signal" evidence="1">
    <location>
        <begin position="351"/>
        <end position="367"/>
    </location>
</feature>
<feature type="compositionally biased region" description="Low complexity" evidence="3">
    <location>
        <begin position="332"/>
        <end position="342"/>
    </location>
</feature>
<feature type="compositionally biased region" description="Basic and acidic residues" evidence="3">
    <location>
        <begin position="345"/>
        <end position="358"/>
    </location>
</feature>
<feature type="compositionally biased region" description="Basic and acidic residues" evidence="3">
    <location>
        <begin position="472"/>
        <end position="495"/>
    </location>
</feature>
<sequence length="495" mass="55103">MDSKRAALESGDGPDAKRLDTTDDQDKEASGGDGSQVMLAKHVAPYTGHGCTPPMESYLFEPTPAGSQLLPWKTSVDLDNDAELEKPTSDKKPDTAKLSRRELAKMRREHTLRALALERELTNKPGQTPASEVLLVRFPDPEITAPMLAGLSKDIRDVVLPISVAPRYCLVHLKAGADVEATICDINRVRFGTGHLRAELKPFSDEEQAEFIDPCSLYVGNIPFNMTTSAIKAYFANAMRVDIGVLKREKRARYAFVRYASPDQTMEAFKELVDSPLNSRTLTVRYRRLRKRAGMPMVQCATSFQALQSPNGDDDNTDCKVISPPPLESIIISDSDNCSDSSGNGKEDGKRKKKINEQEREIEKLKRQMAEYGAIIKSLQFRQNSLEDTFIPDLTPKVEPSVNPTGCLLGSNAVHLMRDIKKECDYLGIPDPVPATKPTTQAQDDSQKKAKRSCFGRLFTGPFRRGTSAMKTADEYEKDDRLEELYAQLERDPDP</sequence>
<gene>
    <name type="primary">Pof</name>
    <name type="ORF">CG3691</name>
</gene>